<protein>
    <recommendedName>
        <fullName>ATP-dependent RNA helicase HAS1</fullName>
        <ecNumber>3.6.4.13</ecNumber>
    </recommendedName>
</protein>
<feature type="chain" id="PRO_0000294626" description="ATP-dependent RNA helicase HAS1">
    <location>
        <begin position="1"/>
        <end position="587"/>
    </location>
</feature>
<feature type="domain" description="Helicase ATP-binding" evidence="2">
    <location>
        <begin position="143"/>
        <end position="317"/>
    </location>
</feature>
<feature type="domain" description="Helicase C-terminal" evidence="3">
    <location>
        <begin position="331"/>
        <end position="501"/>
    </location>
</feature>
<feature type="region of interest" description="Disordered" evidence="4">
    <location>
        <begin position="1"/>
        <end position="103"/>
    </location>
</feature>
<feature type="region of interest" description="Disordered" evidence="4">
    <location>
        <begin position="558"/>
        <end position="587"/>
    </location>
</feature>
<feature type="short sequence motif" description="Q motif">
    <location>
        <begin position="112"/>
        <end position="140"/>
    </location>
</feature>
<feature type="short sequence motif" description="DEAD box">
    <location>
        <begin position="265"/>
        <end position="268"/>
    </location>
</feature>
<feature type="compositionally biased region" description="Basic residues" evidence="4">
    <location>
        <begin position="1"/>
        <end position="11"/>
    </location>
</feature>
<feature type="compositionally biased region" description="Basic and acidic residues" evidence="4">
    <location>
        <begin position="42"/>
        <end position="54"/>
    </location>
</feature>
<feature type="compositionally biased region" description="Acidic residues" evidence="4">
    <location>
        <begin position="55"/>
        <end position="69"/>
    </location>
</feature>
<feature type="binding site" evidence="2">
    <location>
        <begin position="156"/>
        <end position="163"/>
    </location>
    <ligand>
        <name>ATP</name>
        <dbReference type="ChEBI" id="CHEBI:30616"/>
    </ligand>
</feature>
<reference key="1">
    <citation type="journal article" date="2005" name="Nature">
        <title>The genome sequence of the rice blast fungus Magnaporthe grisea.</title>
        <authorList>
            <person name="Dean R.A."/>
            <person name="Talbot N.J."/>
            <person name="Ebbole D.J."/>
            <person name="Farman M.L."/>
            <person name="Mitchell T.K."/>
            <person name="Orbach M.J."/>
            <person name="Thon M.R."/>
            <person name="Kulkarni R."/>
            <person name="Xu J.-R."/>
            <person name="Pan H."/>
            <person name="Read N.D."/>
            <person name="Lee Y.-H."/>
            <person name="Carbone I."/>
            <person name="Brown D."/>
            <person name="Oh Y.Y."/>
            <person name="Donofrio N."/>
            <person name="Jeong J.S."/>
            <person name="Soanes D.M."/>
            <person name="Djonovic S."/>
            <person name="Kolomiets E."/>
            <person name="Rehmeyer C."/>
            <person name="Li W."/>
            <person name="Harding M."/>
            <person name="Kim S."/>
            <person name="Lebrun M.-H."/>
            <person name="Bohnert H."/>
            <person name="Coughlan S."/>
            <person name="Butler J."/>
            <person name="Calvo S.E."/>
            <person name="Ma L.-J."/>
            <person name="Nicol R."/>
            <person name="Purcell S."/>
            <person name="Nusbaum C."/>
            <person name="Galagan J.E."/>
            <person name="Birren B.W."/>
        </authorList>
    </citation>
    <scope>NUCLEOTIDE SEQUENCE [LARGE SCALE GENOMIC DNA]</scope>
    <source>
        <strain>70-15 / ATCC MYA-4617 / FGSC 8958</strain>
    </source>
</reference>
<accession>A4R8B5</accession>
<accession>G4N6P1</accession>
<evidence type="ECO:0000250" key="1"/>
<evidence type="ECO:0000255" key="2">
    <source>
        <dbReference type="PROSITE-ProRule" id="PRU00541"/>
    </source>
</evidence>
<evidence type="ECO:0000255" key="3">
    <source>
        <dbReference type="PROSITE-ProRule" id="PRU00542"/>
    </source>
</evidence>
<evidence type="ECO:0000256" key="4">
    <source>
        <dbReference type="SAM" id="MobiDB-lite"/>
    </source>
</evidence>
<evidence type="ECO:0000305" key="5"/>
<organism>
    <name type="scientific">Pyricularia oryzae (strain 70-15 / ATCC MYA-4617 / FGSC 8958)</name>
    <name type="common">Rice blast fungus</name>
    <name type="synonym">Magnaporthe oryzae</name>
    <dbReference type="NCBI Taxonomy" id="242507"/>
    <lineage>
        <taxon>Eukaryota</taxon>
        <taxon>Fungi</taxon>
        <taxon>Dikarya</taxon>
        <taxon>Ascomycota</taxon>
        <taxon>Pezizomycotina</taxon>
        <taxon>Sordariomycetes</taxon>
        <taxon>Sordariomycetidae</taxon>
        <taxon>Magnaporthales</taxon>
        <taxon>Pyriculariaceae</taxon>
        <taxon>Pyricularia</taxon>
    </lineage>
</organism>
<gene>
    <name type="primary">HAS1</name>
    <name type="ORF">MGG_06522</name>
</gene>
<name>HAS1_PYRO7</name>
<proteinExistence type="inferred from homology"/>
<dbReference type="EC" id="3.6.4.13"/>
<dbReference type="EMBL" id="CM001234">
    <property type="protein sequence ID" value="EHA50710.1"/>
    <property type="molecule type" value="Genomic_DNA"/>
</dbReference>
<dbReference type="RefSeq" id="XP_003717029.1">
    <property type="nucleotide sequence ID" value="XM_003716981.1"/>
</dbReference>
<dbReference type="SMR" id="A4R8B5"/>
<dbReference type="FunCoup" id="A4R8B5">
    <property type="interactions" value="1152"/>
</dbReference>
<dbReference type="STRING" id="242507.A4R8B5"/>
<dbReference type="EnsemblFungi" id="MGG_06522T0">
    <property type="protein sequence ID" value="MGG_06522T0"/>
    <property type="gene ID" value="MGG_06522"/>
</dbReference>
<dbReference type="GeneID" id="2684677"/>
<dbReference type="KEGG" id="mgr:MGG_06522"/>
<dbReference type="VEuPathDB" id="FungiDB:MGG_06522"/>
<dbReference type="eggNOG" id="KOG0342">
    <property type="taxonomic scope" value="Eukaryota"/>
</dbReference>
<dbReference type="HOGENOM" id="CLU_003041_26_5_1"/>
<dbReference type="InParanoid" id="A4R8B5"/>
<dbReference type="OMA" id="LMEFHSQ"/>
<dbReference type="OrthoDB" id="10259640at2759"/>
<dbReference type="Proteomes" id="UP000009058">
    <property type="component" value="Chromosome 4"/>
</dbReference>
<dbReference type="GO" id="GO:0005635">
    <property type="term" value="C:nuclear envelope"/>
    <property type="evidence" value="ECO:0007669"/>
    <property type="project" value="EnsemblFungi"/>
</dbReference>
<dbReference type="GO" id="GO:0005730">
    <property type="term" value="C:nucleolus"/>
    <property type="evidence" value="ECO:0007669"/>
    <property type="project" value="UniProtKB-SubCell"/>
</dbReference>
<dbReference type="GO" id="GO:0030687">
    <property type="term" value="C:preribosome, large subunit precursor"/>
    <property type="evidence" value="ECO:0007669"/>
    <property type="project" value="EnsemblFungi"/>
</dbReference>
<dbReference type="GO" id="GO:0032040">
    <property type="term" value="C:small-subunit processome"/>
    <property type="evidence" value="ECO:0007669"/>
    <property type="project" value="EnsemblFungi"/>
</dbReference>
<dbReference type="GO" id="GO:0005524">
    <property type="term" value="F:ATP binding"/>
    <property type="evidence" value="ECO:0007669"/>
    <property type="project" value="UniProtKB-KW"/>
</dbReference>
<dbReference type="GO" id="GO:0016887">
    <property type="term" value="F:ATP hydrolysis activity"/>
    <property type="evidence" value="ECO:0007669"/>
    <property type="project" value="RHEA"/>
</dbReference>
<dbReference type="GO" id="GO:0042802">
    <property type="term" value="F:identical protein binding"/>
    <property type="evidence" value="ECO:0007669"/>
    <property type="project" value="EnsemblFungi"/>
</dbReference>
<dbReference type="GO" id="GO:0003723">
    <property type="term" value="F:RNA binding"/>
    <property type="evidence" value="ECO:0007669"/>
    <property type="project" value="UniProtKB-KW"/>
</dbReference>
<dbReference type="GO" id="GO:0003724">
    <property type="term" value="F:RNA helicase activity"/>
    <property type="evidence" value="ECO:0007669"/>
    <property type="project" value="UniProtKB-EC"/>
</dbReference>
<dbReference type="GO" id="GO:0000463">
    <property type="term" value="P:maturation of LSU-rRNA from tricistronic rRNA transcript (SSU-rRNA, 5.8S rRNA, LSU-rRNA)"/>
    <property type="evidence" value="ECO:0007669"/>
    <property type="project" value="EnsemblFungi"/>
</dbReference>
<dbReference type="GO" id="GO:0000462">
    <property type="term" value="P:maturation of SSU-rRNA from tricistronic rRNA transcript (SSU-rRNA, 5.8S rRNA, LSU-rRNA)"/>
    <property type="evidence" value="ECO:0007669"/>
    <property type="project" value="EnsemblFungi"/>
</dbReference>
<dbReference type="GO" id="GO:1990417">
    <property type="term" value="P:snoRNA release from pre-rRNA"/>
    <property type="evidence" value="ECO:0007669"/>
    <property type="project" value="EnsemblFungi"/>
</dbReference>
<dbReference type="CDD" id="cd17942">
    <property type="entry name" value="DEADc_DDX18"/>
    <property type="match status" value="1"/>
</dbReference>
<dbReference type="CDD" id="cd18787">
    <property type="entry name" value="SF2_C_DEAD"/>
    <property type="match status" value="1"/>
</dbReference>
<dbReference type="FunFam" id="3.40.50.300:FF:000379">
    <property type="entry name" value="RNA helicase"/>
    <property type="match status" value="1"/>
</dbReference>
<dbReference type="FunFam" id="3.40.50.300:FF:000460">
    <property type="entry name" value="RNA helicase"/>
    <property type="match status" value="1"/>
</dbReference>
<dbReference type="Gene3D" id="3.40.50.300">
    <property type="entry name" value="P-loop containing nucleotide triphosphate hydrolases"/>
    <property type="match status" value="2"/>
</dbReference>
<dbReference type="InterPro" id="IPR044773">
    <property type="entry name" value="DDX18/Has1_DEADc"/>
</dbReference>
<dbReference type="InterPro" id="IPR011545">
    <property type="entry name" value="DEAD/DEAH_box_helicase_dom"/>
</dbReference>
<dbReference type="InterPro" id="IPR014001">
    <property type="entry name" value="Helicase_ATP-bd"/>
</dbReference>
<dbReference type="InterPro" id="IPR001650">
    <property type="entry name" value="Helicase_C-like"/>
</dbReference>
<dbReference type="InterPro" id="IPR027417">
    <property type="entry name" value="P-loop_NTPase"/>
</dbReference>
<dbReference type="InterPro" id="IPR000629">
    <property type="entry name" value="RNA-helicase_DEAD-box_CS"/>
</dbReference>
<dbReference type="InterPro" id="IPR014014">
    <property type="entry name" value="RNA_helicase_DEAD_Q_motif"/>
</dbReference>
<dbReference type="InterPro" id="IPR025313">
    <property type="entry name" value="SPB4-like_CTE"/>
</dbReference>
<dbReference type="PANTHER" id="PTHR24031">
    <property type="entry name" value="RNA HELICASE"/>
    <property type="match status" value="1"/>
</dbReference>
<dbReference type="Pfam" id="PF13959">
    <property type="entry name" value="CTE_SPB4"/>
    <property type="match status" value="1"/>
</dbReference>
<dbReference type="Pfam" id="PF00270">
    <property type="entry name" value="DEAD"/>
    <property type="match status" value="1"/>
</dbReference>
<dbReference type="Pfam" id="PF00271">
    <property type="entry name" value="Helicase_C"/>
    <property type="match status" value="1"/>
</dbReference>
<dbReference type="SMART" id="SM00487">
    <property type="entry name" value="DEXDc"/>
    <property type="match status" value="1"/>
</dbReference>
<dbReference type="SMART" id="SM01178">
    <property type="entry name" value="DUF4217"/>
    <property type="match status" value="1"/>
</dbReference>
<dbReference type="SMART" id="SM00490">
    <property type="entry name" value="HELICc"/>
    <property type="match status" value="1"/>
</dbReference>
<dbReference type="SUPFAM" id="SSF52540">
    <property type="entry name" value="P-loop containing nucleoside triphosphate hydrolases"/>
    <property type="match status" value="2"/>
</dbReference>
<dbReference type="PROSITE" id="PS00039">
    <property type="entry name" value="DEAD_ATP_HELICASE"/>
    <property type="match status" value="1"/>
</dbReference>
<dbReference type="PROSITE" id="PS51192">
    <property type="entry name" value="HELICASE_ATP_BIND_1"/>
    <property type="match status" value="1"/>
</dbReference>
<dbReference type="PROSITE" id="PS51194">
    <property type="entry name" value="HELICASE_CTER"/>
    <property type="match status" value="1"/>
</dbReference>
<dbReference type="PROSITE" id="PS51195">
    <property type="entry name" value="Q_MOTIF"/>
    <property type="match status" value="1"/>
</dbReference>
<comment type="function">
    <text>ATP-dependent RNA helicase involved in 40S ribosomal subunit biogenesis. Required for the processing and cleavage of 35S pre-rRNA at sites A0, A1, and A2, leading to mature 18S rRNA.</text>
</comment>
<comment type="catalytic activity">
    <reaction>
        <text>ATP + H2O = ADP + phosphate + H(+)</text>
        <dbReference type="Rhea" id="RHEA:13065"/>
        <dbReference type="ChEBI" id="CHEBI:15377"/>
        <dbReference type="ChEBI" id="CHEBI:15378"/>
        <dbReference type="ChEBI" id="CHEBI:30616"/>
        <dbReference type="ChEBI" id="CHEBI:43474"/>
        <dbReference type="ChEBI" id="CHEBI:456216"/>
        <dbReference type="EC" id="3.6.4.13"/>
    </reaction>
</comment>
<comment type="subunit">
    <text evidence="1">Associates in the nucleolus with the 60S and pre-60S ribosomal subunits.</text>
</comment>
<comment type="subcellular location">
    <subcellularLocation>
        <location evidence="1">Nucleus</location>
        <location evidence="1">Nucleolus</location>
    </subcellularLocation>
</comment>
<comment type="domain">
    <text>The Q motif is unique to and characteristic of the DEAD box family of RNA helicases and controls ATP binding and hydrolysis.</text>
</comment>
<comment type="similarity">
    <text evidence="5">Belongs to the DEAD box helicase family. DDX18/HAS1 subfamily.</text>
</comment>
<keyword id="KW-0067">ATP-binding</keyword>
<keyword id="KW-0347">Helicase</keyword>
<keyword id="KW-0378">Hydrolase</keyword>
<keyword id="KW-0547">Nucleotide-binding</keyword>
<keyword id="KW-0539">Nucleus</keyword>
<keyword id="KW-1185">Reference proteome</keyword>
<keyword id="KW-0690">Ribosome biogenesis</keyword>
<keyword id="KW-0694">RNA-binding</keyword>
<keyword id="KW-0698">rRNA processing</keyword>
<sequence>MDDRSSKKRKLKDVNGAKASGAATDVTVKPKKLKKAQSQEEVEPKVEKGSKKEEEENDWSDEEENEAADDAGHSSDSDVDEGDDTIAAPAKEADGDIPGDLTLPTTAESEAQAFSELNLSENTMKAIEEMGFTKMTEIQRRGIPPLLAGKDVLGAAKTGSGKTLAFLIPAVEMLRSLKFKPRNGTGVIVVSPTRELALQIFGVARDLMKHHSQTYGIVIGGANRRAEAEKLSKGVNLLIATPGRLLDHLQNTPFVFKNLRSLVIDEADRILEIGFEDEMRQIIKILPKERQSMLFSATQTTKVEDLARVSLRPGPLYLNVDEEKEYSTVEGLEQGYVVCEADKRFILLFSFLQKMKKKKIIVFFSSCNSVKYYAELLNYIDCQVLDLHGKQKQQKRTNTFFEFCNADRGTLICTDVAARGLDIPAVDWIVQFDPPDDPRDYIHRVGRTARGTNKKGRSLMFLLPSEVGFLTYLKQARVPVVEFDFPTKSIKNVQSQLEKLIGKNYYLNSSAKDGFRSYLHAYASHSLRSVFDINKLDLAKVAKSFGFATPPRVDIQLGASMSKDKKAGGRRAYGSQPRQGGTYGKRR</sequence>